<keyword id="KW-0325">Glycoprotein</keyword>
<keyword id="KW-0964">Secreted</keyword>
<keyword id="KW-0732">Signal</keyword>
<sequence length="217" mass="22495">MARQATFIVALCVCGLAIAGLPRLASAGDLATEQHEGDIGYGVRAYAGVSNYDGDDDAAGNPVDSDVTDDAITDGEWPRVVSGQKPHTTQKGSLIKKLAVPVVGALTSYLVADRVLPELTSAEEEGTESIPGKKRVKTAVGIAALVAAAAFAGLGLARTFRHFVPKKSKTVASEDSALGNSEEQYVEGTVNGSSDPEQERAGGPLIPEGDEQEVDTE</sequence>
<feature type="signal peptide" evidence="1">
    <location>
        <begin position="1"/>
        <end position="19"/>
    </location>
</feature>
<feature type="chain" id="PRO_0000021364" description="Dense granule protein 1">
    <location>
        <begin position="20"/>
        <end position="217"/>
    </location>
</feature>
<feature type="region of interest" description="Disordered" evidence="2">
    <location>
        <begin position="171"/>
        <end position="217"/>
    </location>
</feature>
<feature type="compositionally biased region" description="Polar residues" evidence="2">
    <location>
        <begin position="171"/>
        <end position="183"/>
    </location>
</feature>
<feature type="compositionally biased region" description="Acidic residues" evidence="2">
    <location>
        <begin position="208"/>
        <end position="217"/>
    </location>
</feature>
<feature type="glycosylation site" description="N-linked (GlcNAc...) asparagine" evidence="1">
    <location>
        <position position="191"/>
    </location>
</feature>
<feature type="sequence conflict" description="In Ref. 2." evidence="3" ref="2">
    <original>GLAI</original>
    <variation>IRHE</variation>
    <location>
        <begin position="15"/>
        <end position="18"/>
    </location>
</feature>
<reference key="1">
    <citation type="journal article" date="1997" name="Mol. Biochem. Parasitol.">
        <title>A dense granule protein (NCDG1) gene from Neospora caninum.</title>
        <authorList>
            <person name="Lally N.C."/>
            <person name="Jenkins M.C."/>
            <person name="Liddell S."/>
            <person name="Dubey J.P."/>
        </authorList>
    </citation>
    <scope>NUCLEOTIDE SEQUENCE [MRNA]</scope>
    <source>
        <strain>Nc-1</strain>
    </source>
</reference>
<reference key="2">
    <citation type="journal article" date="1996" name="Clin. Diagn. Lab. Immunol.">
        <title>Evaluation of two Neospora caninum recombinant antigens for use in an enzyme-linked immunosorbent assay for the diagnosis of bovine neosporosis.</title>
        <authorList>
            <person name="Lally N.C."/>
            <person name="Jenkins M.C."/>
            <person name="Dubey J.P."/>
        </authorList>
    </citation>
    <scope>NUCLEOTIDE SEQUENCE [MRNA] OF 15-217</scope>
    <source>
        <strain>Nc-1</strain>
    </source>
</reference>
<organism>
    <name type="scientific">Neospora caninum</name>
    <name type="common">Coccidian parasite</name>
    <dbReference type="NCBI Taxonomy" id="29176"/>
    <lineage>
        <taxon>Eukaryota</taxon>
        <taxon>Sar</taxon>
        <taxon>Alveolata</taxon>
        <taxon>Apicomplexa</taxon>
        <taxon>Conoidasida</taxon>
        <taxon>Coccidia</taxon>
        <taxon>Eucoccidiorida</taxon>
        <taxon>Eimeriorina</taxon>
        <taxon>Sarcocystidae</taxon>
        <taxon>Neospora</taxon>
    </lineage>
</organism>
<evidence type="ECO:0000255" key="1"/>
<evidence type="ECO:0000256" key="2">
    <source>
        <dbReference type="SAM" id="MobiDB-lite"/>
    </source>
</evidence>
<evidence type="ECO:0000305" key="3"/>
<protein>
    <recommendedName>
        <fullName>Dense granule protein 1</fullName>
    </recommendedName>
    <alternativeName>
        <fullName>Antigen Nc4.1</fullName>
    </alternativeName>
    <alternativeName>
        <fullName>NcDG1</fullName>
    </alternativeName>
</protein>
<dbReference type="EMBL" id="U72991">
    <property type="protein sequence ID" value="AAB48402.1"/>
    <property type="molecule type" value="mRNA"/>
</dbReference>
<dbReference type="EMBL" id="U82229">
    <property type="protein sequence ID" value="AAC47661.1"/>
    <property type="molecule type" value="mRNA"/>
</dbReference>
<dbReference type="EMBL" id="U36386">
    <property type="protein sequence ID" value="AAC47096.1"/>
    <property type="molecule type" value="mRNA"/>
</dbReference>
<dbReference type="GlyCosmos" id="P90661">
    <property type="glycosylation" value="1 site, No reported glycans"/>
</dbReference>
<dbReference type="VEuPathDB" id="ToxoDB:Ncaninum_LIV_000658800"/>
<dbReference type="VEuPathDB" id="ToxoDB:NCLIV_021640"/>
<dbReference type="GO" id="GO:0005576">
    <property type="term" value="C:extracellular region"/>
    <property type="evidence" value="ECO:0007669"/>
    <property type="project" value="UniProtKB-SubCell"/>
</dbReference>
<dbReference type="InterPro" id="IPR008120">
    <property type="entry name" value="Dense_granule_Gra7_protein"/>
</dbReference>
<dbReference type="PRINTS" id="PR01747">
    <property type="entry name" value="DENSEGRNULE7"/>
</dbReference>
<comment type="subcellular location">
    <subcellularLocation>
        <location evidence="3">Secreted</location>
    </subcellularLocation>
</comment>
<comment type="similarity">
    <text evidence="3">Belongs to the Gra7 family.</text>
</comment>
<name>GRA1_NEOCA</name>
<proteinExistence type="evidence at transcript level"/>
<gene>
    <name type="primary">DG1</name>
</gene>
<accession>P90661</accession>
<accession>O02507</accession>
<accession>Q25539</accession>